<protein>
    <recommendedName>
        <fullName evidence="1 3">Epoxyqueuosine reductase QueH</fullName>
        <ecNumber evidence="1 5">1.17.99.6</ecNumber>
    </recommendedName>
    <alternativeName>
        <fullName evidence="1 4">Queuosine biosynthesis protein QueH</fullName>
    </alternativeName>
</protein>
<proteinExistence type="evidence at protein level"/>
<reference key="1">
    <citation type="journal article" date="1999" name="Nature">
        <title>Evidence for lateral gene transfer between Archaea and Bacteria from genome sequence of Thermotoga maritima.</title>
        <authorList>
            <person name="Nelson K.E."/>
            <person name="Clayton R.A."/>
            <person name="Gill S.R."/>
            <person name="Gwinn M.L."/>
            <person name="Dodson R.J."/>
            <person name="Haft D.H."/>
            <person name="Hickey E.K."/>
            <person name="Peterson J.D."/>
            <person name="Nelson W.C."/>
            <person name="Ketchum K.A."/>
            <person name="McDonald L.A."/>
            <person name="Utterback T.R."/>
            <person name="Malek J.A."/>
            <person name="Linher K.D."/>
            <person name="Garrett M.M."/>
            <person name="Stewart A.M."/>
            <person name="Cotton M.D."/>
            <person name="Pratt M.S."/>
            <person name="Phillips C.A."/>
            <person name="Richardson D.L."/>
            <person name="Heidelberg J.F."/>
            <person name="Sutton G.G."/>
            <person name="Fleischmann R.D."/>
            <person name="Eisen J.A."/>
            <person name="White O."/>
            <person name="Salzberg S.L."/>
            <person name="Smith H.O."/>
            <person name="Venter J.C."/>
            <person name="Fraser C.M."/>
        </authorList>
    </citation>
    <scope>NUCLEOTIDE SEQUENCE [LARGE SCALE GENOMIC DNA]</scope>
    <source>
        <strain>ATCC 43589 / DSM 3109 / JCM 10099 / NBRC 100826 / MSB8</strain>
    </source>
</reference>
<reference key="2">
    <citation type="journal article" date="2017" name="ACS Chem. Biol.">
        <title>Identification of a novel epoxyqueuosine reductase family by comparative genomics.</title>
        <authorList>
            <person name="Zallot R."/>
            <person name="Ross R."/>
            <person name="Chen W.H."/>
            <person name="Bruner S.D."/>
            <person name="Limbach P.A."/>
            <person name="de Crecy-Lagard V."/>
        </authorList>
    </citation>
    <scope>FUNCTION</scope>
    <scope>CATALYTIC ACTIVITY</scope>
    <scope>PATHWAY</scope>
</reference>
<dbReference type="EC" id="1.17.99.6" evidence="1 5"/>
<dbReference type="EMBL" id="AE000512">
    <property type="protein sequence ID" value="AAD35833.1"/>
    <property type="molecule type" value="Genomic_DNA"/>
</dbReference>
<dbReference type="PIR" id="F72338">
    <property type="entry name" value="F72338"/>
</dbReference>
<dbReference type="RefSeq" id="NP_228540.1">
    <property type="nucleotide sequence ID" value="NC_000853.1"/>
</dbReference>
<dbReference type="PDB" id="7LC5">
    <property type="method" value="X-ray"/>
    <property type="resolution" value="1.50 A"/>
    <property type="chains" value="A=1-192"/>
</dbReference>
<dbReference type="PDB" id="7LC7">
    <property type="method" value="X-ray"/>
    <property type="resolution" value="1.58 A"/>
    <property type="chains" value="A=1-192"/>
</dbReference>
<dbReference type="PDB" id="9D86">
    <property type="method" value="X-ray"/>
    <property type="resolution" value="1.88 A"/>
    <property type="chains" value="A=1-192"/>
</dbReference>
<dbReference type="PDB" id="9DCO">
    <property type="method" value="X-ray"/>
    <property type="resolution" value="2.11 A"/>
    <property type="chains" value="A=1-192"/>
</dbReference>
<dbReference type="PDB" id="9DEU">
    <property type="method" value="X-ray"/>
    <property type="resolution" value="1.70 A"/>
    <property type="chains" value="A=1-192"/>
</dbReference>
<dbReference type="PDBsum" id="7LC5"/>
<dbReference type="PDBsum" id="7LC7"/>
<dbReference type="PDBsum" id="9D86"/>
<dbReference type="PDBsum" id="9DCO"/>
<dbReference type="PDBsum" id="9DEU"/>
<dbReference type="SMR" id="Q9WZJ0"/>
<dbReference type="STRING" id="243274.TM_0731"/>
<dbReference type="PaxDb" id="243274-THEMA_01000"/>
<dbReference type="EnsemblBacteria" id="AAD35833">
    <property type="protein sequence ID" value="AAD35833"/>
    <property type="gene ID" value="TM_0731"/>
</dbReference>
<dbReference type="KEGG" id="tma:TM0731"/>
<dbReference type="PATRIC" id="fig|243274.5.peg.744"/>
<dbReference type="eggNOG" id="COG1636">
    <property type="taxonomic scope" value="Bacteria"/>
</dbReference>
<dbReference type="InParanoid" id="Q9WZJ0"/>
<dbReference type="OrthoDB" id="9801033at2"/>
<dbReference type="UniPathway" id="UPA00392"/>
<dbReference type="Proteomes" id="UP000008183">
    <property type="component" value="Chromosome"/>
</dbReference>
<dbReference type="GO" id="GO:0051539">
    <property type="term" value="F:4 iron, 4 sulfur cluster binding"/>
    <property type="evidence" value="ECO:0007669"/>
    <property type="project" value="UniProtKB-UniRule"/>
</dbReference>
<dbReference type="GO" id="GO:0052693">
    <property type="term" value="F:epoxyqueuosine reductase activity"/>
    <property type="evidence" value="ECO:0007669"/>
    <property type="project" value="UniProtKB-UniRule"/>
</dbReference>
<dbReference type="GO" id="GO:0046872">
    <property type="term" value="F:metal ion binding"/>
    <property type="evidence" value="ECO:0007669"/>
    <property type="project" value="UniProtKB-KW"/>
</dbReference>
<dbReference type="GO" id="GO:0008616">
    <property type="term" value="P:queuosine biosynthetic process"/>
    <property type="evidence" value="ECO:0007669"/>
    <property type="project" value="UniProtKB-UniRule"/>
</dbReference>
<dbReference type="GO" id="GO:0006400">
    <property type="term" value="P:tRNA modification"/>
    <property type="evidence" value="ECO:0007669"/>
    <property type="project" value="UniProtKB-UniRule"/>
</dbReference>
<dbReference type="HAMAP" id="MF_02089">
    <property type="entry name" value="QueH"/>
    <property type="match status" value="1"/>
</dbReference>
<dbReference type="InterPro" id="IPR003828">
    <property type="entry name" value="QueH"/>
</dbReference>
<dbReference type="PANTHER" id="PTHR36701">
    <property type="entry name" value="EPOXYQUEUOSINE REDUCTASE QUEH"/>
    <property type="match status" value="1"/>
</dbReference>
<dbReference type="PANTHER" id="PTHR36701:SF1">
    <property type="entry name" value="EPOXYQUEUOSINE REDUCTASE QUEH"/>
    <property type="match status" value="1"/>
</dbReference>
<dbReference type="Pfam" id="PF02677">
    <property type="entry name" value="QueH"/>
    <property type="match status" value="1"/>
</dbReference>
<feature type="chain" id="PRO_0000439906" description="Epoxyqueuosine reductase QueH">
    <location>
        <begin position="1"/>
        <end position="192"/>
    </location>
</feature>
<feature type="binding site" evidence="1">
    <location>
        <position position="9"/>
    </location>
    <ligand>
        <name>[4Fe-4S] cluster</name>
        <dbReference type="ChEBI" id="CHEBI:49883"/>
    </ligand>
</feature>
<feature type="binding site" evidence="1">
    <location>
        <position position="10"/>
    </location>
    <ligand>
        <name>[4Fe-4S] cluster</name>
        <dbReference type="ChEBI" id="CHEBI:49883"/>
    </ligand>
</feature>
<feature type="binding site" evidence="1">
    <location>
        <position position="87"/>
    </location>
    <ligand>
        <name>[4Fe-4S] cluster</name>
        <dbReference type="ChEBI" id="CHEBI:49883"/>
    </ligand>
</feature>
<feature type="binding site" evidence="1">
    <location>
        <position position="90"/>
    </location>
    <ligand>
        <name>[4Fe-4S] cluster</name>
        <dbReference type="ChEBI" id="CHEBI:49883"/>
    </ligand>
</feature>
<feature type="disulfide bond" description="Redox-active" evidence="1">
    <location>
        <begin position="169"/>
        <end position="171"/>
    </location>
</feature>
<feature type="strand" evidence="7">
    <location>
        <begin position="4"/>
        <end position="8"/>
    </location>
</feature>
<feature type="helix" evidence="7">
    <location>
        <begin position="11"/>
        <end position="18"/>
    </location>
</feature>
<feature type="strand" evidence="7">
    <location>
        <begin position="23"/>
        <end position="28"/>
    </location>
</feature>
<feature type="helix" evidence="7">
    <location>
        <begin position="36"/>
        <end position="53"/>
    </location>
</feature>
<feature type="strand" evidence="7">
    <location>
        <begin position="57"/>
        <end position="59"/>
    </location>
</feature>
<feature type="helix" evidence="7">
    <location>
        <begin position="64"/>
        <end position="74"/>
    </location>
</feature>
<feature type="helix" evidence="7">
    <location>
        <begin position="75"/>
        <end position="77"/>
    </location>
</feature>
<feature type="helix" evidence="7">
    <location>
        <begin position="85"/>
        <end position="104"/>
    </location>
</feature>
<feature type="strand" evidence="7">
    <location>
        <begin position="108"/>
        <end position="112"/>
    </location>
</feature>
<feature type="helix" evidence="7">
    <location>
        <begin position="113"/>
        <end position="116"/>
    </location>
</feature>
<feature type="strand" evidence="8">
    <location>
        <begin position="118"/>
        <end position="120"/>
    </location>
</feature>
<feature type="helix" evidence="7">
    <location>
        <begin position="122"/>
        <end position="136"/>
    </location>
</feature>
<feature type="turn" evidence="7">
    <location>
        <begin position="145"/>
        <end position="149"/>
    </location>
</feature>
<feature type="helix" evidence="7">
    <location>
        <begin position="150"/>
        <end position="161"/>
    </location>
</feature>
<feature type="helix" evidence="7">
    <location>
        <begin position="172"/>
        <end position="179"/>
    </location>
</feature>
<evidence type="ECO:0000255" key="1">
    <source>
        <dbReference type="HAMAP-Rule" id="MF_02089"/>
    </source>
</evidence>
<evidence type="ECO:0000269" key="2">
    <source>
    </source>
</evidence>
<evidence type="ECO:0000303" key="3">
    <source>
    </source>
</evidence>
<evidence type="ECO:0000305" key="4"/>
<evidence type="ECO:0000305" key="5">
    <source>
    </source>
</evidence>
<evidence type="ECO:0000312" key="6">
    <source>
        <dbReference type="EMBL" id="AAD35833.1"/>
    </source>
</evidence>
<evidence type="ECO:0007829" key="7">
    <source>
        <dbReference type="PDB" id="7LC5"/>
    </source>
</evidence>
<evidence type="ECO:0007829" key="8">
    <source>
        <dbReference type="PDB" id="7LC7"/>
    </source>
</evidence>
<sequence length="192" mass="22509">MGTVLIHVCCAPDLLTTIFHVRDAEFFFYNPNIQPLSEYEKRREAVDKVANHFSLNVRYGEYSTEEIRKWYTAVKDYKDLGEGSKRCERCISFLLERTAQEARKRGHESFSTTLLASPRKNLPMIENIGKTIEEKYGVKFFFKNFRKGGAYQEGVRLSKELGIYRQNYCGCVFSLLERREKHAEISRKRGHM</sequence>
<keyword id="KW-0002">3D-structure</keyword>
<keyword id="KW-0004">4Fe-4S</keyword>
<keyword id="KW-1015">Disulfide bond</keyword>
<keyword id="KW-0408">Iron</keyword>
<keyword id="KW-0411">Iron-sulfur</keyword>
<keyword id="KW-0479">Metal-binding</keyword>
<keyword id="KW-0560">Oxidoreductase</keyword>
<keyword id="KW-0671">Queuosine biosynthesis</keyword>
<keyword id="KW-0676">Redox-active center</keyword>
<keyword id="KW-1185">Reference proteome</keyword>
<keyword id="KW-0819">tRNA processing</keyword>
<name>QUEH_THEMA</name>
<accession>Q9WZJ0</accession>
<gene>
    <name evidence="1 3" type="primary">queH</name>
    <name evidence="6" type="ordered locus">TM_0731</name>
</gene>
<comment type="function">
    <text evidence="1 2">Catalyzes the conversion of epoxyqueuosine (oQ) to queuosine (Q), which is a hypermodified base found in the wobble positions of tRNA(Asp), tRNA(Asn), tRNA(His) and tRNA(Tyr).</text>
</comment>
<comment type="catalytic activity">
    <reaction evidence="1 5">
        <text>epoxyqueuosine(34) in tRNA + AH2 = queuosine(34) in tRNA + A + H2O</text>
        <dbReference type="Rhea" id="RHEA:32159"/>
        <dbReference type="Rhea" id="RHEA-COMP:18571"/>
        <dbReference type="Rhea" id="RHEA-COMP:18582"/>
        <dbReference type="ChEBI" id="CHEBI:13193"/>
        <dbReference type="ChEBI" id="CHEBI:15377"/>
        <dbReference type="ChEBI" id="CHEBI:17499"/>
        <dbReference type="ChEBI" id="CHEBI:194431"/>
        <dbReference type="ChEBI" id="CHEBI:194443"/>
        <dbReference type="EC" id="1.17.99.6"/>
    </reaction>
</comment>
<comment type="pathway">
    <text evidence="1 5">tRNA modification; tRNA-queuosine biosynthesis.</text>
</comment>
<comment type="similarity">
    <text evidence="1 4">Belongs to the QueH family.</text>
</comment>
<organism>
    <name type="scientific">Thermotoga maritima (strain ATCC 43589 / DSM 3109 / JCM 10099 / NBRC 100826 / MSB8)</name>
    <dbReference type="NCBI Taxonomy" id="243274"/>
    <lineage>
        <taxon>Bacteria</taxon>
        <taxon>Thermotogati</taxon>
        <taxon>Thermotogota</taxon>
        <taxon>Thermotogae</taxon>
        <taxon>Thermotogales</taxon>
        <taxon>Thermotogaceae</taxon>
        <taxon>Thermotoga</taxon>
    </lineage>
</organism>